<keyword id="KW-0963">Cytoplasm</keyword>
<keyword id="KW-0238">DNA-binding</keyword>
<keyword id="KW-1017">Isopeptide bond</keyword>
<keyword id="KW-0446">Lipid-binding</keyword>
<keyword id="KW-0449">Lipoprotein</keyword>
<keyword id="KW-0479">Metal-binding</keyword>
<keyword id="KW-0539">Nucleus</keyword>
<keyword id="KW-0564">Palmitate</keyword>
<keyword id="KW-0597">Phosphoprotein</keyword>
<keyword id="KW-0675">Receptor</keyword>
<keyword id="KW-0754">Steroid-binding</keyword>
<keyword id="KW-0804">Transcription</keyword>
<keyword id="KW-0805">Transcription regulation</keyword>
<keyword id="KW-0832">Ubl conjugation</keyword>
<keyword id="KW-0862">Zinc</keyword>
<keyword id="KW-0863">Zinc-finger</keyword>
<organism>
    <name type="scientific">Pongo pygmaeus</name>
    <name type="common">Bornean orangutan</name>
    <dbReference type="NCBI Taxonomy" id="9600"/>
    <lineage>
        <taxon>Eukaryota</taxon>
        <taxon>Metazoa</taxon>
        <taxon>Chordata</taxon>
        <taxon>Craniata</taxon>
        <taxon>Vertebrata</taxon>
        <taxon>Euteleostomi</taxon>
        <taxon>Mammalia</taxon>
        <taxon>Eutheria</taxon>
        <taxon>Euarchontoglires</taxon>
        <taxon>Primates</taxon>
        <taxon>Haplorrhini</taxon>
        <taxon>Catarrhini</taxon>
        <taxon>Hominidae</taxon>
        <taxon>Pongo</taxon>
    </lineage>
</organism>
<evidence type="ECO:0000250" key="1"/>
<evidence type="ECO:0000250" key="2">
    <source>
        <dbReference type="UniProtKB" id="P06401"/>
    </source>
</evidence>
<evidence type="ECO:0000250" key="3">
    <source>
        <dbReference type="UniProtKB" id="Q00175"/>
    </source>
</evidence>
<evidence type="ECO:0000255" key="4"/>
<evidence type="ECO:0000255" key="5">
    <source>
        <dbReference type="PROSITE-ProRule" id="PRU00407"/>
    </source>
</evidence>
<evidence type="ECO:0000255" key="6">
    <source>
        <dbReference type="PROSITE-ProRule" id="PRU01189"/>
    </source>
</evidence>
<evidence type="ECO:0000256" key="7">
    <source>
        <dbReference type="SAM" id="MobiDB-lite"/>
    </source>
</evidence>
<evidence type="ECO:0000305" key="8"/>
<accession>A7X8B9</accession>
<protein>
    <recommendedName>
        <fullName>Progesterone receptor</fullName>
        <shortName>PR</shortName>
    </recommendedName>
    <alternativeName>
        <fullName>Nuclear receptor subfamily 3 group C member 3</fullName>
    </alternativeName>
</protein>
<name>PRGR_PONPY</name>
<feature type="chain" id="PRO_0000375861" description="Progesterone receptor">
    <location>
        <begin position="1"/>
        <end position="935"/>
    </location>
</feature>
<feature type="domain" description="NR LBD" evidence="6">
    <location>
        <begin position="681"/>
        <end position="915"/>
    </location>
</feature>
<feature type="DNA-binding region" description="Nuclear receptor" evidence="5">
    <location>
        <begin position="569"/>
        <end position="641"/>
    </location>
</feature>
<feature type="zinc finger region" description="NR C4-type" evidence="5">
    <location>
        <begin position="569"/>
        <end position="589"/>
    </location>
</feature>
<feature type="zinc finger region" description="NR C4-type" evidence="5">
    <location>
        <begin position="605"/>
        <end position="629"/>
    </location>
</feature>
<feature type="region of interest" description="Modulating, Pro-Rich">
    <location>
        <begin position="1"/>
        <end position="568"/>
    </location>
</feature>
<feature type="region of interest" description="Disordered" evidence="7">
    <location>
        <begin position="1"/>
        <end position="254"/>
    </location>
</feature>
<feature type="region of interest" description="AF3; mediates transcriptional activation" evidence="2">
    <location>
        <begin position="1"/>
        <end position="164"/>
    </location>
</feature>
<feature type="region of interest" description="Mediates transcriptional transrepression" evidence="2">
    <location>
        <begin position="165"/>
        <end position="305"/>
    </location>
</feature>
<feature type="region of interest" description="Disordered" evidence="7">
    <location>
        <begin position="331"/>
        <end position="378"/>
    </location>
</feature>
<feature type="region of interest" description="Disordered" evidence="7">
    <location>
        <begin position="418"/>
        <end position="438"/>
    </location>
</feature>
<feature type="region of interest" description="AF1; mediates transcriptional activation" evidence="2">
    <location>
        <begin position="456"/>
        <end position="548"/>
    </location>
</feature>
<feature type="region of interest" description="AF2; mediates transcriptional activation" evidence="2">
    <location>
        <begin position="689"/>
        <end position="935"/>
    </location>
</feature>
<feature type="short sequence motif" description="LXXL motif 1" evidence="2">
    <location>
        <begin position="55"/>
        <end position="59"/>
    </location>
</feature>
<feature type="short sequence motif" description="LXXL motif 2" evidence="2">
    <location>
        <begin position="115"/>
        <end position="119"/>
    </location>
</feature>
<feature type="short sequence motif" description="Nuclear localization signal" evidence="4">
    <location>
        <begin position="183"/>
        <end position="187"/>
    </location>
</feature>
<feature type="compositionally biased region" description="Acidic residues" evidence="7">
    <location>
        <begin position="220"/>
        <end position="231"/>
    </location>
</feature>
<feature type="compositionally biased region" description="Low complexity" evidence="7">
    <location>
        <begin position="232"/>
        <end position="246"/>
    </location>
</feature>
<feature type="compositionally biased region" description="Low complexity" evidence="7">
    <location>
        <begin position="335"/>
        <end position="350"/>
    </location>
</feature>
<feature type="compositionally biased region" description="Pro residues" evidence="7">
    <location>
        <begin position="418"/>
        <end position="430"/>
    </location>
</feature>
<feature type="modified residue" description="Phosphoserine" evidence="2">
    <location>
        <position position="20"/>
    </location>
</feature>
<feature type="modified residue" description="Phosphoserine" evidence="2">
    <location>
        <position position="81"/>
    </location>
</feature>
<feature type="modified residue" description="Phosphoserine" evidence="2">
    <location>
        <position position="130"/>
    </location>
</feature>
<feature type="modified residue" description="Phosphoserine" evidence="2">
    <location>
        <position position="162"/>
    </location>
</feature>
<feature type="modified residue" description="Phosphoserine" evidence="2">
    <location>
        <position position="190"/>
    </location>
</feature>
<feature type="modified residue" description="Phosphoserine" evidence="2">
    <location>
        <position position="213"/>
    </location>
</feature>
<feature type="modified residue" description="Phosphoserine; by MAPK1" evidence="2">
    <location>
        <position position="294"/>
    </location>
</feature>
<feature type="modified residue" description="Phosphoserine; by MAPK" evidence="2">
    <location>
        <position position="345"/>
    </location>
</feature>
<feature type="modified residue" description="Phosphoserine; by CDK2" evidence="2">
    <location>
        <position position="400"/>
    </location>
</feature>
<feature type="modified residue" description="Phosphoserine" evidence="2">
    <location>
        <position position="678"/>
    </location>
</feature>
<feature type="cross-link" description="Glycyl lysine isopeptide (Lys-Gly) (interchain with G-Cter in SUMO); alternate" evidence="1">
    <location>
        <position position="388"/>
    </location>
</feature>
<feature type="cross-link" description="Glycyl lysine isopeptide (Lys-Gly) (interchain with G-Cter in ubiquitin); alternate" evidence="2">
    <location>
        <position position="388"/>
    </location>
</feature>
<feature type="cross-link" description="Glycyl lysine isopeptide (Lys-Gly) (interchain with G-Cter in SUMO)" evidence="1">
    <location>
        <position position="533"/>
    </location>
</feature>
<comment type="function">
    <text evidence="2">The steroid hormones and their receptors are involved in the regulation of eukaryotic gene expression and affect cellular proliferation and differentiation in target tissues. Transcriptional activator of several progesteron-dependent promoters in a variety of cell types. Involved in activation of SRC-dependent MAPK signaling on hormone stimulation.</text>
</comment>
<comment type="subunit">
    <text evidence="2 3">Interacts with SMARD1 and UNC45A. Interacts with CUEDC2; the interaction promotes ubiquitination, decreases sumoylation, and represses transcriptional activity. Interacts with PIAS3; the interaction promotes sumoylation of PR in a hormone-dependent manner, inhibits DNA-binding, and alters nuclear export. Interacts with SP1; the interaction requires ligand-induced phosphorylation on Ser-345 by ERK1/2-MAPK. Interacts with PRMT2. Interacts with NCOA2 and NCOA1. Interacts with KLF9. Interacts with GTF2B (By similarity).</text>
</comment>
<comment type="subcellular location">
    <subcellularLocation>
        <location>Nucleus</location>
    </subcellularLocation>
    <subcellularLocation>
        <location>Cytoplasm</location>
    </subcellularLocation>
    <text evidence="1">Nucleoplasmic shuttling is both hormone- and cell cycle-dependent. On hormone stimulation, retained in the cytoplasm in the G(1) and G(2)/M phases (By similarity).</text>
</comment>
<comment type="domain">
    <text>Composed of three domains: a modulating N-terminal domain, a DNA-binding domain and a C-terminal ligand-binding domain.</text>
</comment>
<comment type="PTM">
    <text evidence="1">Phosphorylated on multiple serine sites. Several of these sites are hormone-dependent. Phosphorylation on Ser-294 is highly hormone-dependent and modulates ubiquitination and sumoylation on Lys-388. Phosphorylation on Ser-102 and Ser-345 also requires induction by hormone. Basal phosphorylation on Ser-81, Ser-162, Ser-190 and Ser-400 is increased in response to progesterone and can be phosphorylated in vitro by the CDK2-A1 complex. Increased levels of phosphorylation on Ser-400 also in the presence of EGF, heregulin, IGF, PMA and FBS. Phosphorylation at this site by CDK2 is ligand-independent, and increases nuclear translocation and transcriptional activity. Phosphorylation at Ser-162 and Ser-294, but not at Ser-190, is impaired during the G(2)/M phase of the cell cycle. Phosphorylation on Ser-345 by ERK1/2 MAPK is required for interaction with SP1 (By similarity).</text>
</comment>
<comment type="PTM">
    <text evidence="1">Sumoylation is hormone-dependent and represses transcriptional activity. Sumoylation on all three sites is enhanced by PIAS3. Desumoylated by SENP1. Sumoylation on Lys-388, the main site of sumoylation, is repressed by ubiquitination on the same site, and modulated by phosphorylation at Ser-294 (By similarity).</text>
</comment>
<comment type="PTM">
    <text evidence="1">Ubiquitination is hormone-dependent and represses sumoylation on the same site. Promoted by MAPK-mediated phosphorylation on Ser-294 (By similarity).</text>
</comment>
<comment type="PTM">
    <text evidence="1">Palmitoylated by ZDHHC7 and ZDHHC21. Palmitoylation is required for plasma membrane targeting and for rapid intracellular signaling via ERK and AKT kinases and cAMP generation (By similarity).</text>
</comment>
<comment type="similarity">
    <text evidence="8">Belongs to the nuclear hormone receptor family.</text>
</comment>
<gene>
    <name type="primary">PGR</name>
    <name type="synonym">NR3C3</name>
</gene>
<dbReference type="EMBL" id="DQ234983">
    <property type="protein sequence ID" value="ABB72143.1"/>
    <property type="molecule type" value="Genomic_DNA"/>
</dbReference>
<dbReference type="GO" id="GO:0005737">
    <property type="term" value="C:cytoplasm"/>
    <property type="evidence" value="ECO:0007669"/>
    <property type="project" value="UniProtKB-SubCell"/>
</dbReference>
<dbReference type="GO" id="GO:0005654">
    <property type="term" value="C:nucleoplasm"/>
    <property type="evidence" value="ECO:0007669"/>
    <property type="project" value="UniProtKB-ARBA"/>
</dbReference>
<dbReference type="GO" id="GO:0003707">
    <property type="term" value="F:nuclear steroid receptor activity"/>
    <property type="evidence" value="ECO:0007669"/>
    <property type="project" value="InterPro"/>
</dbReference>
<dbReference type="GO" id="GO:1990837">
    <property type="term" value="F:sequence-specific double-stranded DNA binding"/>
    <property type="evidence" value="ECO:0007669"/>
    <property type="project" value="UniProtKB-ARBA"/>
</dbReference>
<dbReference type="GO" id="GO:0005496">
    <property type="term" value="F:steroid binding"/>
    <property type="evidence" value="ECO:0007669"/>
    <property type="project" value="UniProtKB-KW"/>
</dbReference>
<dbReference type="GO" id="GO:0008270">
    <property type="term" value="F:zinc ion binding"/>
    <property type="evidence" value="ECO:0007669"/>
    <property type="project" value="UniProtKB-KW"/>
</dbReference>
<dbReference type="CDD" id="cd07172">
    <property type="entry name" value="NR_DBD_GR_PR"/>
    <property type="match status" value="1"/>
</dbReference>
<dbReference type="CDD" id="cd07074">
    <property type="entry name" value="NR_LBD_PR"/>
    <property type="match status" value="1"/>
</dbReference>
<dbReference type="FunFam" id="1.10.565.10:FF:000004">
    <property type="entry name" value="Androgen receptor variant"/>
    <property type="match status" value="1"/>
</dbReference>
<dbReference type="FunFam" id="3.30.50.10:FF:000027">
    <property type="entry name" value="Progesterone receptor"/>
    <property type="match status" value="1"/>
</dbReference>
<dbReference type="Gene3D" id="3.30.50.10">
    <property type="entry name" value="Erythroid Transcription Factor GATA-1, subunit A"/>
    <property type="match status" value="1"/>
</dbReference>
<dbReference type="Gene3D" id="1.10.565.10">
    <property type="entry name" value="Retinoid X Receptor"/>
    <property type="match status" value="1"/>
</dbReference>
<dbReference type="InterPro" id="IPR035500">
    <property type="entry name" value="NHR-like_dom_sf"/>
</dbReference>
<dbReference type="InterPro" id="IPR000536">
    <property type="entry name" value="Nucl_hrmn_rcpt_lig-bd"/>
</dbReference>
<dbReference type="InterPro" id="IPR050200">
    <property type="entry name" value="Nuclear_hormone_rcpt_NR3"/>
</dbReference>
<dbReference type="InterPro" id="IPR001723">
    <property type="entry name" value="Nuclear_hrmn_rcpt"/>
</dbReference>
<dbReference type="InterPro" id="IPR000128">
    <property type="entry name" value="Progest_rcpt"/>
</dbReference>
<dbReference type="InterPro" id="IPR001628">
    <property type="entry name" value="Znf_hrmn_rcpt"/>
</dbReference>
<dbReference type="InterPro" id="IPR013088">
    <property type="entry name" value="Znf_NHR/GATA"/>
</dbReference>
<dbReference type="PANTHER" id="PTHR48092">
    <property type="entry name" value="KNIRPS-RELATED PROTEIN-RELATED"/>
    <property type="match status" value="1"/>
</dbReference>
<dbReference type="Pfam" id="PF00104">
    <property type="entry name" value="Hormone_recep"/>
    <property type="match status" value="1"/>
</dbReference>
<dbReference type="Pfam" id="PF02161">
    <property type="entry name" value="Prog_receptor"/>
    <property type="match status" value="1"/>
</dbReference>
<dbReference type="Pfam" id="PF00105">
    <property type="entry name" value="zf-C4"/>
    <property type="match status" value="1"/>
</dbReference>
<dbReference type="PRINTS" id="PR00544">
    <property type="entry name" value="PROGESTRONER"/>
</dbReference>
<dbReference type="PRINTS" id="PR00398">
    <property type="entry name" value="STRDHORMONER"/>
</dbReference>
<dbReference type="PRINTS" id="PR00047">
    <property type="entry name" value="STROIDFINGER"/>
</dbReference>
<dbReference type="SMART" id="SM00430">
    <property type="entry name" value="HOLI"/>
    <property type="match status" value="1"/>
</dbReference>
<dbReference type="SMART" id="SM00399">
    <property type="entry name" value="ZnF_C4"/>
    <property type="match status" value="1"/>
</dbReference>
<dbReference type="SUPFAM" id="SSF57716">
    <property type="entry name" value="Glucocorticoid receptor-like (DNA-binding domain)"/>
    <property type="match status" value="1"/>
</dbReference>
<dbReference type="SUPFAM" id="SSF48508">
    <property type="entry name" value="Nuclear receptor ligand-binding domain"/>
    <property type="match status" value="1"/>
</dbReference>
<dbReference type="PROSITE" id="PS51843">
    <property type="entry name" value="NR_LBD"/>
    <property type="match status" value="1"/>
</dbReference>
<dbReference type="PROSITE" id="PS00031">
    <property type="entry name" value="NUCLEAR_REC_DBD_1"/>
    <property type="match status" value="1"/>
</dbReference>
<dbReference type="PROSITE" id="PS51030">
    <property type="entry name" value="NUCLEAR_REC_DBD_2"/>
    <property type="match status" value="1"/>
</dbReference>
<reference key="1">
    <citation type="journal article" date="2008" name="Mol. Phylogenet. Evol.">
        <title>The human progesterone receptor shows evidence of adaptive evolution associated with its ability to act as a transcription factor.</title>
        <authorList>
            <person name="Chen C."/>
            <person name="Opazo J.C."/>
            <person name="Erez O."/>
            <person name="Uddin M."/>
            <person name="Santolaya-Forgas J."/>
            <person name="Goodman M."/>
            <person name="Grossman L.I."/>
            <person name="Romero R."/>
            <person name="Wildman D.E."/>
        </authorList>
    </citation>
    <scope>NUCLEOTIDE SEQUENCE [GENOMIC DNA]</scope>
</reference>
<sequence length="935" mass="99036">MTELKAKGPRAPHVAGGPPSPEVGSPLLCRPAVGPFPGSQTSDTLPEVSAIPISLDGLLFPRPCQGQDPSDEKTQDQQSLSDVEGAYSRAEAKRGAGGSSSSPPEKDSGLLDSVLDTLLAPSGPGQSQPSPPACEVTSSWCLFGPELPEDPPAAPATQGVLSPLMSRSGGKAGDSSGTAAAHKVLPRGLSPSRQLLLPASGSPHWSGAPVKPSPQPAAVEVEEEDGSESEDSAGPLLKGKPRALGGAAAGGGAAAVPPGVAAGGVALVPKEDSRFSAPRVALVEQDAPMAPGRSPLATTVMDFIHVPILPLNHALLAARTRQLLEDESYDGGAGAASAFAPPRSSPSASSTPVAVGDFPDCAYPPDAEPKDDAYPLYSDFQPPALKIKEEEEGAEASTRSPRSYLVAGANPAAFPDFPLGPPPPLPPRAPPTRAGEAAVTAAPASASVSSASSSGSTLECILYKAQGAPPQQGPFAPPPXKAPGVSGCLLPRDGLPSTSASAAAAAAGAAPALYPALGLNGLPQLGYQAAVLKEGLPQVYPPYLNYLRPDSEASQSPQYSFESLPQKICLICGDEASGCHYGVLTCGSCKVFFKRAMEGQHNYLCAGRNDCIVDKIRRKNCPACRLRKCCQAGMVLGGRKFKKFNKVRVVRALDAVALPQPVGIPNESQALSQRFTFSPGQDIQLIPPLINLLMSIEPDVIYAGHDNTKPDTSSSLLTSLNQLGERQLLSVVKWSKSLPGFRNLHIDDQITLIQYSWMSLMVFGLGWRSYKHVSGQMLYFAPDLILNEQRMKESSFYSLCLTMWQIPQEFVKLQVSQEEFLCMKVLLLLNTIPLEGLRSQTQFEEMRSSYIRELIKAIGLRQKGVVSSSQRFYQLTKLLDNLHDLVKQLHLYCLNTFIQSRALSVEFPEMMSEVIAAQLPKILAGMVKPLLFHKK</sequence>
<proteinExistence type="inferred from homology"/>